<comment type="function">
    <text evidence="1">Aux/IAA proteins are short-lived transcriptional factors that function as repressors of early auxin response genes at low auxin concentrations.</text>
</comment>
<comment type="subunit">
    <text evidence="1">Homodimers and heterodimers.</text>
</comment>
<comment type="subcellular location">
    <subcellularLocation>
        <location evidence="1">Nucleus</location>
    </subcellularLocation>
</comment>
<comment type="alternative products">
    <event type="alternative splicing"/>
    <isoform>
        <id>Q6Z5M0-1</id>
        <name>1</name>
        <sequence type="displayed"/>
    </isoform>
    <isoform>
        <id>Q6Z5M0-2</id>
        <name>2</name>
        <sequence type="described" ref="VSP_017233 VSP_017234"/>
    </isoform>
</comment>
<comment type="tissue specificity">
    <text evidence="4">Highly expressed in green shoots. Expressed in flowers.</text>
</comment>
<comment type="induction">
    <text evidence="4">Not induced by auxin.</text>
</comment>
<comment type="similarity">
    <text evidence="6">Belongs to the Aux/IAA family.</text>
</comment>
<proteinExistence type="evidence at transcript level"/>
<evidence type="ECO:0000250" key="1"/>
<evidence type="ECO:0000255" key="2">
    <source>
        <dbReference type="PROSITE-ProRule" id="PRU01081"/>
    </source>
</evidence>
<evidence type="ECO:0000256" key="3">
    <source>
        <dbReference type="SAM" id="MobiDB-lite"/>
    </source>
</evidence>
<evidence type="ECO:0000269" key="4">
    <source>
    </source>
</evidence>
<evidence type="ECO:0000303" key="5">
    <source>
    </source>
</evidence>
<evidence type="ECO:0000305" key="6"/>
<evidence type="ECO:0000312" key="7">
    <source>
        <dbReference type="EMBL" id="EEE57713.1"/>
    </source>
</evidence>
<feature type="chain" id="PRO_0000223207" description="Auxin-responsive protein IAA8">
    <location>
        <begin position="1"/>
        <end position="205"/>
    </location>
</feature>
<feature type="domain" description="PB1" evidence="2">
    <location>
        <begin position="103"/>
        <end position="199"/>
    </location>
</feature>
<feature type="region of interest" description="Disordered" evidence="3">
    <location>
        <begin position="1"/>
        <end position="48"/>
    </location>
</feature>
<feature type="region of interest" description="Disordered" evidence="3">
    <location>
        <begin position="71"/>
        <end position="98"/>
    </location>
</feature>
<feature type="short sequence motif" description="EAR-like (transcriptional repression)" evidence="1">
    <location>
        <begin position="58"/>
        <end position="62"/>
    </location>
</feature>
<feature type="compositionally biased region" description="Polar residues" evidence="3">
    <location>
        <begin position="7"/>
        <end position="19"/>
    </location>
</feature>
<feature type="compositionally biased region" description="Low complexity" evidence="3">
    <location>
        <begin position="25"/>
        <end position="39"/>
    </location>
</feature>
<feature type="compositionally biased region" description="Polar residues" evidence="3">
    <location>
        <begin position="73"/>
        <end position="87"/>
    </location>
</feature>
<feature type="splice variant" id="VSP_017233" description="In isoform 2." evidence="5">
    <original>SSLTT</original>
    <variation>QDFDL</variation>
    <location>
        <begin position="80"/>
        <end position="84"/>
    </location>
</feature>
<feature type="splice variant" id="VSP_017234" description="In isoform 2." evidence="5">
    <location>
        <begin position="85"/>
        <end position="205"/>
    </location>
</feature>
<sequence>MECMASTEESLPASSSMDSCSGELPTTTTTAPAQSTASSGCRPPATAAKRRSLISTDLRLGLTLSSVVHIDGNNPSTPRSSLTTATVTADRGGGGGGHGRRRSLFVKVYMEGVPIGRKLDLLPLDGYKGLVARLASMFRASITYHHCHRQFAVVGMKTNKVHHVLTYEDQEGDWMMAGDVPWELFLTSVKRLRIARADDKYCYSC</sequence>
<name>IAA8_ORYSJ</name>
<gene>
    <name type="primary">IAA8</name>
    <name type="ordered locus">Os02g0723400</name>
    <name type="ordered locus">LOC_Os02g49160</name>
    <name evidence="7" type="ORF">OsJ_08196</name>
    <name type="ORF">P0685G12.16-1</name>
    <name type="ORF">P0685G12.16-2</name>
</gene>
<dbReference type="EMBL" id="AP005113">
    <property type="protein sequence ID" value="BAD13028.1"/>
    <property type="molecule type" value="Genomic_DNA"/>
</dbReference>
<dbReference type="EMBL" id="AP005113">
    <property type="protein sequence ID" value="BAD13029.1"/>
    <property type="molecule type" value="Genomic_DNA"/>
</dbReference>
<dbReference type="EMBL" id="AP008208">
    <property type="protein sequence ID" value="BAF09886.1"/>
    <property type="molecule type" value="Genomic_DNA"/>
</dbReference>
<dbReference type="EMBL" id="AP014958">
    <property type="protein sequence ID" value="BAS80673.1"/>
    <property type="molecule type" value="Genomic_DNA"/>
</dbReference>
<dbReference type="EMBL" id="AP014958">
    <property type="protein sequence ID" value="BAS80674.1"/>
    <property type="molecule type" value="Genomic_DNA"/>
</dbReference>
<dbReference type="EMBL" id="CM000139">
    <property type="protein sequence ID" value="EEE57713.1"/>
    <property type="molecule type" value="Genomic_DNA"/>
</dbReference>
<dbReference type="EMBL" id="AK066518">
    <property type="protein sequence ID" value="BAG90008.1"/>
    <property type="molecule type" value="mRNA"/>
</dbReference>
<dbReference type="EMBL" id="AK108275">
    <property type="status" value="NOT_ANNOTATED_CDS"/>
    <property type="molecule type" value="mRNA"/>
</dbReference>
<dbReference type="RefSeq" id="XP_015624217.1">
    <property type="nucleotide sequence ID" value="XM_015768731.1"/>
</dbReference>
<dbReference type="SMR" id="Q6Z5M0"/>
<dbReference type="STRING" id="39947.Q6Z5M0"/>
<dbReference type="PaxDb" id="39947-Q6Z5M0"/>
<dbReference type="EnsemblPlants" id="Os02t0723400-02">
    <molecule id="Q6Z5M0-1"/>
    <property type="protein sequence ID" value="Os02t0723400-02"/>
    <property type="gene ID" value="Os02g0723400"/>
</dbReference>
<dbReference type="Gramene" id="Os02t0723400-02">
    <molecule id="Q6Z5M0-1"/>
    <property type="protein sequence ID" value="Os02t0723400-02"/>
    <property type="gene ID" value="Os02g0723400"/>
</dbReference>
<dbReference type="KEGG" id="dosa:Os02g0723400"/>
<dbReference type="eggNOG" id="ENOG502S04C">
    <property type="taxonomic scope" value="Eukaryota"/>
</dbReference>
<dbReference type="HOGENOM" id="CLU_049393_3_1_1"/>
<dbReference type="InParanoid" id="Q6Z5M0"/>
<dbReference type="OMA" id="SRANYHY"/>
<dbReference type="OrthoDB" id="652411at2759"/>
<dbReference type="PlantReactome" id="R-OSA-5608118">
    <property type="pathway name" value="Auxin signalling"/>
</dbReference>
<dbReference type="Proteomes" id="UP000000763">
    <property type="component" value="Chromosome 2"/>
</dbReference>
<dbReference type="Proteomes" id="UP000007752">
    <property type="component" value="Chromosome 2"/>
</dbReference>
<dbReference type="Proteomes" id="UP000059680">
    <property type="component" value="Chromosome 2"/>
</dbReference>
<dbReference type="GO" id="GO:0005634">
    <property type="term" value="C:nucleus"/>
    <property type="evidence" value="ECO:0007669"/>
    <property type="project" value="UniProtKB-SubCell"/>
</dbReference>
<dbReference type="GO" id="GO:0009734">
    <property type="term" value="P:auxin-activated signaling pathway"/>
    <property type="evidence" value="ECO:0007669"/>
    <property type="project" value="UniProtKB-KW"/>
</dbReference>
<dbReference type="GO" id="GO:0006355">
    <property type="term" value="P:regulation of DNA-templated transcription"/>
    <property type="evidence" value="ECO:0007669"/>
    <property type="project" value="InterPro"/>
</dbReference>
<dbReference type="GO" id="GO:0009733">
    <property type="term" value="P:response to auxin"/>
    <property type="evidence" value="ECO:0000250"/>
    <property type="project" value="Gramene"/>
</dbReference>
<dbReference type="FunFam" id="3.10.20.90:FF:000247">
    <property type="entry name" value="Auxin-responsive protein"/>
    <property type="match status" value="1"/>
</dbReference>
<dbReference type="Gene3D" id="3.10.20.90">
    <property type="entry name" value="Phosphatidylinositol 3-kinase Catalytic Subunit, Chain A, domain 1"/>
    <property type="match status" value="1"/>
</dbReference>
<dbReference type="InterPro" id="IPR033389">
    <property type="entry name" value="AUX/IAA_dom"/>
</dbReference>
<dbReference type="InterPro" id="IPR003311">
    <property type="entry name" value="AUX_IAA"/>
</dbReference>
<dbReference type="InterPro" id="IPR053793">
    <property type="entry name" value="PB1-like"/>
</dbReference>
<dbReference type="PANTHER" id="PTHR31734">
    <property type="entry name" value="AUXIN-RESPONSIVE PROTEIN IAA17"/>
    <property type="match status" value="1"/>
</dbReference>
<dbReference type="PANTHER" id="PTHR31734:SF94">
    <property type="entry name" value="AUXIN-RESPONSIVE PROTEIN IAA30"/>
    <property type="match status" value="1"/>
</dbReference>
<dbReference type="Pfam" id="PF02309">
    <property type="entry name" value="AUX_IAA"/>
    <property type="match status" value="1"/>
</dbReference>
<dbReference type="SUPFAM" id="SSF54277">
    <property type="entry name" value="CAD &amp; PB1 domains"/>
    <property type="match status" value="1"/>
</dbReference>
<dbReference type="PROSITE" id="PS51745">
    <property type="entry name" value="PB1"/>
    <property type="match status" value="1"/>
</dbReference>
<accession>Q6Z5M0</accession>
<accession>Q0DY02</accession>
<accession>Q6Z5M1</accession>
<organism>
    <name type="scientific">Oryza sativa subsp. japonica</name>
    <name type="common">Rice</name>
    <dbReference type="NCBI Taxonomy" id="39947"/>
    <lineage>
        <taxon>Eukaryota</taxon>
        <taxon>Viridiplantae</taxon>
        <taxon>Streptophyta</taxon>
        <taxon>Embryophyta</taxon>
        <taxon>Tracheophyta</taxon>
        <taxon>Spermatophyta</taxon>
        <taxon>Magnoliopsida</taxon>
        <taxon>Liliopsida</taxon>
        <taxon>Poales</taxon>
        <taxon>Poaceae</taxon>
        <taxon>BOP clade</taxon>
        <taxon>Oryzoideae</taxon>
        <taxon>Oryzeae</taxon>
        <taxon>Oryzinae</taxon>
        <taxon>Oryza</taxon>
        <taxon>Oryza sativa</taxon>
    </lineage>
</organism>
<keyword id="KW-0025">Alternative splicing</keyword>
<keyword id="KW-0927">Auxin signaling pathway</keyword>
<keyword id="KW-0539">Nucleus</keyword>
<keyword id="KW-1185">Reference proteome</keyword>
<keyword id="KW-0678">Repressor</keyword>
<keyword id="KW-0804">Transcription</keyword>
<keyword id="KW-0805">Transcription regulation</keyword>
<protein>
    <recommendedName>
        <fullName>Auxin-responsive protein IAA8</fullName>
    </recommendedName>
    <alternativeName>
        <fullName>Indoleacetic acid-induced protein 8</fullName>
    </alternativeName>
</protein>
<reference key="1">
    <citation type="journal article" date="2005" name="Nature">
        <title>The map-based sequence of the rice genome.</title>
        <authorList>
            <consortium name="International rice genome sequencing project (IRGSP)"/>
        </authorList>
    </citation>
    <scope>NUCLEOTIDE SEQUENCE [LARGE SCALE GENOMIC DNA]</scope>
    <source>
        <strain>cv. Nipponbare</strain>
    </source>
</reference>
<reference key="2">
    <citation type="journal article" date="2008" name="Nucleic Acids Res.">
        <title>The rice annotation project database (RAP-DB): 2008 update.</title>
        <authorList>
            <consortium name="The rice annotation project (RAP)"/>
        </authorList>
    </citation>
    <scope>GENOME REANNOTATION</scope>
    <source>
        <strain>cv. Nipponbare</strain>
    </source>
</reference>
<reference key="3">
    <citation type="journal article" date="2013" name="Rice">
        <title>Improvement of the Oryza sativa Nipponbare reference genome using next generation sequence and optical map data.</title>
        <authorList>
            <person name="Kawahara Y."/>
            <person name="de la Bastide M."/>
            <person name="Hamilton J.P."/>
            <person name="Kanamori H."/>
            <person name="McCombie W.R."/>
            <person name="Ouyang S."/>
            <person name="Schwartz D.C."/>
            <person name="Tanaka T."/>
            <person name="Wu J."/>
            <person name="Zhou S."/>
            <person name="Childs K.L."/>
            <person name="Davidson R.M."/>
            <person name="Lin H."/>
            <person name="Quesada-Ocampo L."/>
            <person name="Vaillancourt B."/>
            <person name="Sakai H."/>
            <person name="Lee S.S."/>
            <person name="Kim J."/>
            <person name="Numa H."/>
            <person name="Itoh T."/>
            <person name="Buell C.R."/>
            <person name="Matsumoto T."/>
        </authorList>
    </citation>
    <scope>GENOME REANNOTATION</scope>
    <source>
        <strain>cv. Nipponbare</strain>
    </source>
</reference>
<reference key="4">
    <citation type="journal article" date="2005" name="PLoS Biol.">
        <title>The genomes of Oryza sativa: a history of duplications.</title>
        <authorList>
            <person name="Yu J."/>
            <person name="Wang J."/>
            <person name="Lin W."/>
            <person name="Li S."/>
            <person name="Li H."/>
            <person name="Zhou J."/>
            <person name="Ni P."/>
            <person name="Dong W."/>
            <person name="Hu S."/>
            <person name="Zeng C."/>
            <person name="Zhang J."/>
            <person name="Zhang Y."/>
            <person name="Li R."/>
            <person name="Xu Z."/>
            <person name="Li S."/>
            <person name="Li X."/>
            <person name="Zheng H."/>
            <person name="Cong L."/>
            <person name="Lin L."/>
            <person name="Yin J."/>
            <person name="Geng J."/>
            <person name="Li G."/>
            <person name="Shi J."/>
            <person name="Liu J."/>
            <person name="Lv H."/>
            <person name="Li J."/>
            <person name="Wang J."/>
            <person name="Deng Y."/>
            <person name="Ran L."/>
            <person name="Shi X."/>
            <person name="Wang X."/>
            <person name="Wu Q."/>
            <person name="Li C."/>
            <person name="Ren X."/>
            <person name="Wang J."/>
            <person name="Wang X."/>
            <person name="Li D."/>
            <person name="Liu D."/>
            <person name="Zhang X."/>
            <person name="Ji Z."/>
            <person name="Zhao W."/>
            <person name="Sun Y."/>
            <person name="Zhang Z."/>
            <person name="Bao J."/>
            <person name="Han Y."/>
            <person name="Dong L."/>
            <person name="Ji J."/>
            <person name="Chen P."/>
            <person name="Wu S."/>
            <person name="Liu J."/>
            <person name="Xiao Y."/>
            <person name="Bu D."/>
            <person name="Tan J."/>
            <person name="Yang L."/>
            <person name="Ye C."/>
            <person name="Zhang J."/>
            <person name="Xu J."/>
            <person name="Zhou Y."/>
            <person name="Yu Y."/>
            <person name="Zhang B."/>
            <person name="Zhuang S."/>
            <person name="Wei H."/>
            <person name="Liu B."/>
            <person name="Lei M."/>
            <person name="Yu H."/>
            <person name="Li Y."/>
            <person name="Xu H."/>
            <person name="Wei S."/>
            <person name="He X."/>
            <person name="Fang L."/>
            <person name="Zhang Z."/>
            <person name="Zhang Y."/>
            <person name="Huang X."/>
            <person name="Su Z."/>
            <person name="Tong W."/>
            <person name="Li J."/>
            <person name="Tong Z."/>
            <person name="Li S."/>
            <person name="Ye J."/>
            <person name="Wang L."/>
            <person name="Fang L."/>
            <person name="Lei T."/>
            <person name="Chen C.-S."/>
            <person name="Chen H.-C."/>
            <person name="Xu Z."/>
            <person name="Li H."/>
            <person name="Huang H."/>
            <person name="Zhang F."/>
            <person name="Xu H."/>
            <person name="Li N."/>
            <person name="Zhao C."/>
            <person name="Li S."/>
            <person name="Dong L."/>
            <person name="Huang Y."/>
            <person name="Li L."/>
            <person name="Xi Y."/>
            <person name="Qi Q."/>
            <person name="Li W."/>
            <person name="Zhang B."/>
            <person name="Hu W."/>
            <person name="Zhang Y."/>
            <person name="Tian X."/>
            <person name="Jiao Y."/>
            <person name="Liang X."/>
            <person name="Jin J."/>
            <person name="Gao L."/>
            <person name="Zheng W."/>
            <person name="Hao B."/>
            <person name="Liu S.-M."/>
            <person name="Wang W."/>
            <person name="Yuan L."/>
            <person name="Cao M."/>
            <person name="McDermott J."/>
            <person name="Samudrala R."/>
            <person name="Wang J."/>
            <person name="Wong G.K.-S."/>
            <person name="Yang H."/>
        </authorList>
    </citation>
    <scope>NUCLEOTIDE SEQUENCE [LARGE SCALE GENOMIC DNA]</scope>
    <source>
        <strain>cv. Nipponbare</strain>
    </source>
</reference>
<reference key="5">
    <citation type="journal article" date="2003" name="Science">
        <title>Collection, mapping, and annotation of over 28,000 cDNA clones from japonica rice.</title>
        <authorList>
            <consortium name="The rice full-length cDNA consortium"/>
        </authorList>
    </citation>
    <scope>NUCLEOTIDE SEQUENCE [LARGE SCALE MRNA] (ISOFORMS 1 AND 2)</scope>
    <source>
        <strain>cv. Nipponbare</strain>
    </source>
</reference>
<reference key="6">
    <citation type="journal article" date="2006" name="Funct. Integr. Genomics">
        <title>Structure and expression analysis of early auxin-responsive Aux/IAA gene family in rice (Oryza sativa).</title>
        <authorList>
            <person name="Jain M."/>
            <person name="Kaur N."/>
            <person name="Garg R."/>
            <person name="Thakur J.K."/>
            <person name="Tyagi A.K."/>
            <person name="Khurana J.P."/>
        </authorList>
    </citation>
    <scope>TISSUE SPECIFICITY</scope>
    <scope>INDUCTION</scope>
    <scope>NOMENCLATURE</scope>
</reference>